<name>GCH4_ROSDO</name>
<feature type="chain" id="PRO_0000289519" description="GTP cyclohydrolase FolE2">
    <location>
        <begin position="1"/>
        <end position="367"/>
    </location>
</feature>
<feature type="site" description="May be catalytically important" evidence="1">
    <location>
        <position position="225"/>
    </location>
</feature>
<reference key="1">
    <citation type="journal article" date="2007" name="J. Bacteriol.">
        <title>The complete genome sequence of Roseobacter denitrificans reveals a mixotrophic rather than photosynthetic metabolism.</title>
        <authorList>
            <person name="Swingley W.D."/>
            <person name="Sadekar S."/>
            <person name="Mastrian S.D."/>
            <person name="Matthies H.J."/>
            <person name="Hao J."/>
            <person name="Ramos H."/>
            <person name="Acharya C.R."/>
            <person name="Conrad A.L."/>
            <person name="Taylor H.L."/>
            <person name="Dejesa L.C."/>
            <person name="Shah M.K."/>
            <person name="O'Huallachain M.E."/>
            <person name="Lince M.T."/>
            <person name="Blankenship R.E."/>
            <person name="Beatty J.T."/>
            <person name="Touchman J.W."/>
        </authorList>
    </citation>
    <scope>NUCLEOTIDE SEQUENCE [LARGE SCALE GENOMIC DNA]</scope>
    <source>
        <strain>ATCC 33942 / OCh 114</strain>
    </source>
</reference>
<keyword id="KW-0378">Hydrolase</keyword>
<keyword id="KW-1185">Reference proteome</keyword>
<comment type="function">
    <text evidence="1">Converts GTP to 7,8-dihydroneopterin triphosphate.</text>
</comment>
<comment type="catalytic activity">
    <reaction evidence="1">
        <text>GTP + H2O = 7,8-dihydroneopterin 3'-triphosphate + formate + H(+)</text>
        <dbReference type="Rhea" id="RHEA:17473"/>
        <dbReference type="ChEBI" id="CHEBI:15377"/>
        <dbReference type="ChEBI" id="CHEBI:15378"/>
        <dbReference type="ChEBI" id="CHEBI:15740"/>
        <dbReference type="ChEBI" id="CHEBI:37565"/>
        <dbReference type="ChEBI" id="CHEBI:58462"/>
        <dbReference type="EC" id="3.5.4.16"/>
    </reaction>
</comment>
<comment type="pathway">
    <text evidence="1">Cofactor biosynthesis; 7,8-dihydroneopterin triphosphate biosynthesis; 7,8-dihydroneopterin triphosphate from GTP: step 1/1.</text>
</comment>
<comment type="similarity">
    <text evidence="1">Belongs to the GTP cyclohydrolase IV family.</text>
</comment>
<comment type="sequence caution" evidence="2">
    <conflict type="erroneous initiation">
        <sequence resource="EMBL-CDS" id="ABG31549"/>
    </conflict>
</comment>
<proteinExistence type="inferred from homology"/>
<accession>Q168P4</accession>
<organism>
    <name type="scientific">Roseobacter denitrificans (strain ATCC 33942 / OCh 114)</name>
    <name type="common">Erythrobacter sp. (strain OCh 114)</name>
    <name type="synonym">Roseobacter denitrificans</name>
    <dbReference type="NCBI Taxonomy" id="375451"/>
    <lineage>
        <taxon>Bacteria</taxon>
        <taxon>Pseudomonadati</taxon>
        <taxon>Pseudomonadota</taxon>
        <taxon>Alphaproteobacteria</taxon>
        <taxon>Rhodobacterales</taxon>
        <taxon>Roseobacteraceae</taxon>
        <taxon>Roseobacter</taxon>
    </lineage>
</organism>
<protein>
    <recommendedName>
        <fullName evidence="1">GTP cyclohydrolase FolE2</fullName>
        <ecNumber evidence="1">3.5.4.16</ecNumber>
    </recommendedName>
</protein>
<evidence type="ECO:0000255" key="1">
    <source>
        <dbReference type="HAMAP-Rule" id="MF_01527"/>
    </source>
</evidence>
<evidence type="ECO:0000305" key="2"/>
<sequence>MNIHTPGLELTPDRDEAQAALDVLRQWAKQATPAEISELDPSVARLVPGMDGVEYPALSREYPSDFSLDDGYKETLPDLQNGPSSLIRGTKQQIQHVGISNFRLPIRFHTRSGGDITLETSVTGSVSLEADKKGINMSRIMRSFYKHAEETFSFEVIEAALDAYINDLESFDARIQMRFSFPMKVDSLRSGLSGYQYYDIALELVDQGGVRKKIMHLDYVYSSTCPCSLELSEHARATRGQLATPHSQRSVARISVEVENDGQCLWFEDLIEACRRAVPTETQVMVKREDEQAFAELNAANPIFVEDAARLFCEQLHSDTRIGDFRVIASHQESLHSHDAVSVLMEGETFKSESLDPKLFNTLFHVG</sequence>
<dbReference type="EC" id="3.5.4.16" evidence="1"/>
<dbReference type="EMBL" id="CP000362">
    <property type="protein sequence ID" value="ABG31549.1"/>
    <property type="status" value="ALT_INIT"/>
    <property type="molecule type" value="Genomic_DNA"/>
</dbReference>
<dbReference type="RefSeq" id="WP_044033044.1">
    <property type="nucleotide sequence ID" value="NC_008209.1"/>
</dbReference>
<dbReference type="SMR" id="Q168P4"/>
<dbReference type="STRING" id="375451.RD1_1941"/>
<dbReference type="KEGG" id="rde:RD1_1941"/>
<dbReference type="eggNOG" id="COG1469">
    <property type="taxonomic scope" value="Bacteria"/>
</dbReference>
<dbReference type="HOGENOM" id="CLU_062816_0_1_5"/>
<dbReference type="OrthoDB" id="239637at2"/>
<dbReference type="UniPathway" id="UPA00848">
    <property type="reaction ID" value="UER00151"/>
</dbReference>
<dbReference type="Proteomes" id="UP000007029">
    <property type="component" value="Chromosome"/>
</dbReference>
<dbReference type="GO" id="GO:0003934">
    <property type="term" value="F:GTP cyclohydrolase I activity"/>
    <property type="evidence" value="ECO:0007669"/>
    <property type="project" value="UniProtKB-UniRule"/>
</dbReference>
<dbReference type="GO" id="GO:0046654">
    <property type="term" value="P:tetrahydrofolate biosynthetic process"/>
    <property type="evidence" value="ECO:0007669"/>
    <property type="project" value="UniProtKB-UniRule"/>
</dbReference>
<dbReference type="Gene3D" id="3.10.270.10">
    <property type="entry name" value="Urate Oxidase"/>
    <property type="match status" value="1"/>
</dbReference>
<dbReference type="HAMAP" id="MF_01527_B">
    <property type="entry name" value="GTP_cyclohydrol_B"/>
    <property type="match status" value="1"/>
</dbReference>
<dbReference type="InterPro" id="IPR022838">
    <property type="entry name" value="GTP_cyclohydrolase_FolE2"/>
</dbReference>
<dbReference type="InterPro" id="IPR003801">
    <property type="entry name" value="GTP_cyclohydrolase_FolE2/MptA"/>
</dbReference>
<dbReference type="NCBIfam" id="NF010200">
    <property type="entry name" value="PRK13674.1-1"/>
    <property type="match status" value="1"/>
</dbReference>
<dbReference type="PANTHER" id="PTHR36445">
    <property type="entry name" value="GTP CYCLOHYDROLASE MPTA"/>
    <property type="match status" value="1"/>
</dbReference>
<dbReference type="PANTHER" id="PTHR36445:SF1">
    <property type="entry name" value="GTP CYCLOHYDROLASE MPTA"/>
    <property type="match status" value="1"/>
</dbReference>
<dbReference type="Pfam" id="PF02649">
    <property type="entry name" value="GCHY-1"/>
    <property type="match status" value="1"/>
</dbReference>
<gene>
    <name evidence="1" type="primary">folE2</name>
    <name type="ordered locus">RD1_1941</name>
</gene>